<protein>
    <recommendedName>
        <fullName evidence="1">Ribonuclease HII</fullName>
        <shortName evidence="1">RNase HII</shortName>
        <ecNumber evidence="1">3.1.26.4</ecNumber>
    </recommendedName>
</protein>
<dbReference type="EC" id="3.1.26.4" evidence="1"/>
<dbReference type="EMBL" id="CP000911">
    <property type="protein sequence ID" value="ABY37504.1"/>
    <property type="molecule type" value="Genomic_DNA"/>
</dbReference>
<dbReference type="RefSeq" id="WP_012246917.1">
    <property type="nucleotide sequence ID" value="NC_010169.1"/>
</dbReference>
<dbReference type="SMR" id="B0CK74"/>
<dbReference type="KEGG" id="bmt:BSUIS_A0414"/>
<dbReference type="HOGENOM" id="CLU_036532_3_2_5"/>
<dbReference type="Proteomes" id="UP000008545">
    <property type="component" value="Chromosome I"/>
</dbReference>
<dbReference type="GO" id="GO:0005737">
    <property type="term" value="C:cytoplasm"/>
    <property type="evidence" value="ECO:0007669"/>
    <property type="project" value="UniProtKB-SubCell"/>
</dbReference>
<dbReference type="GO" id="GO:0032299">
    <property type="term" value="C:ribonuclease H2 complex"/>
    <property type="evidence" value="ECO:0007669"/>
    <property type="project" value="TreeGrafter"/>
</dbReference>
<dbReference type="GO" id="GO:0030145">
    <property type="term" value="F:manganese ion binding"/>
    <property type="evidence" value="ECO:0007669"/>
    <property type="project" value="UniProtKB-UniRule"/>
</dbReference>
<dbReference type="GO" id="GO:0003723">
    <property type="term" value="F:RNA binding"/>
    <property type="evidence" value="ECO:0007669"/>
    <property type="project" value="InterPro"/>
</dbReference>
<dbReference type="GO" id="GO:0004523">
    <property type="term" value="F:RNA-DNA hybrid ribonuclease activity"/>
    <property type="evidence" value="ECO:0007669"/>
    <property type="project" value="UniProtKB-UniRule"/>
</dbReference>
<dbReference type="GO" id="GO:0043137">
    <property type="term" value="P:DNA replication, removal of RNA primer"/>
    <property type="evidence" value="ECO:0007669"/>
    <property type="project" value="TreeGrafter"/>
</dbReference>
<dbReference type="GO" id="GO:0006298">
    <property type="term" value="P:mismatch repair"/>
    <property type="evidence" value="ECO:0007669"/>
    <property type="project" value="TreeGrafter"/>
</dbReference>
<dbReference type="CDD" id="cd07182">
    <property type="entry name" value="RNase_HII_bacteria_HII_like"/>
    <property type="match status" value="1"/>
</dbReference>
<dbReference type="Gene3D" id="3.30.420.10">
    <property type="entry name" value="Ribonuclease H-like superfamily/Ribonuclease H"/>
    <property type="match status" value="1"/>
</dbReference>
<dbReference type="HAMAP" id="MF_00052_B">
    <property type="entry name" value="RNase_HII_B"/>
    <property type="match status" value="1"/>
</dbReference>
<dbReference type="InterPro" id="IPR022898">
    <property type="entry name" value="RNase_HII"/>
</dbReference>
<dbReference type="InterPro" id="IPR001352">
    <property type="entry name" value="RNase_HII/HIII"/>
</dbReference>
<dbReference type="InterPro" id="IPR024567">
    <property type="entry name" value="RNase_HII/HIII_dom"/>
</dbReference>
<dbReference type="InterPro" id="IPR012337">
    <property type="entry name" value="RNaseH-like_sf"/>
</dbReference>
<dbReference type="InterPro" id="IPR036397">
    <property type="entry name" value="RNaseH_sf"/>
</dbReference>
<dbReference type="NCBIfam" id="NF000595">
    <property type="entry name" value="PRK00015.1-3"/>
    <property type="match status" value="1"/>
</dbReference>
<dbReference type="PANTHER" id="PTHR10954">
    <property type="entry name" value="RIBONUCLEASE H2 SUBUNIT A"/>
    <property type="match status" value="1"/>
</dbReference>
<dbReference type="PANTHER" id="PTHR10954:SF18">
    <property type="entry name" value="RIBONUCLEASE HII"/>
    <property type="match status" value="1"/>
</dbReference>
<dbReference type="Pfam" id="PF01351">
    <property type="entry name" value="RNase_HII"/>
    <property type="match status" value="1"/>
</dbReference>
<dbReference type="SUPFAM" id="SSF53098">
    <property type="entry name" value="Ribonuclease H-like"/>
    <property type="match status" value="1"/>
</dbReference>
<dbReference type="PROSITE" id="PS51975">
    <property type="entry name" value="RNASE_H_2"/>
    <property type="match status" value="1"/>
</dbReference>
<accession>B0CK74</accession>
<proteinExistence type="inferred from homology"/>
<feature type="chain" id="PRO_1000074918" description="Ribonuclease HII">
    <location>
        <begin position="1"/>
        <end position="220"/>
    </location>
</feature>
<feature type="domain" description="RNase H type-2" evidence="2">
    <location>
        <begin position="32"/>
        <end position="220"/>
    </location>
</feature>
<feature type="binding site" evidence="1">
    <location>
        <position position="38"/>
    </location>
    <ligand>
        <name>a divalent metal cation</name>
        <dbReference type="ChEBI" id="CHEBI:60240"/>
    </ligand>
</feature>
<feature type="binding site" evidence="1">
    <location>
        <position position="39"/>
    </location>
    <ligand>
        <name>a divalent metal cation</name>
        <dbReference type="ChEBI" id="CHEBI:60240"/>
    </ligand>
</feature>
<feature type="binding site" evidence="1">
    <location>
        <position position="130"/>
    </location>
    <ligand>
        <name>a divalent metal cation</name>
        <dbReference type="ChEBI" id="CHEBI:60240"/>
    </ligand>
</feature>
<name>RNH2_BRUSI</name>
<organism>
    <name type="scientific">Brucella suis (strain ATCC 23445 / NCTC 10510)</name>
    <dbReference type="NCBI Taxonomy" id="470137"/>
    <lineage>
        <taxon>Bacteria</taxon>
        <taxon>Pseudomonadati</taxon>
        <taxon>Pseudomonadota</taxon>
        <taxon>Alphaproteobacteria</taxon>
        <taxon>Hyphomicrobiales</taxon>
        <taxon>Brucellaceae</taxon>
        <taxon>Brucella/Ochrobactrum group</taxon>
        <taxon>Brucella</taxon>
    </lineage>
</organism>
<keyword id="KW-0963">Cytoplasm</keyword>
<keyword id="KW-0255">Endonuclease</keyword>
<keyword id="KW-0378">Hydrolase</keyword>
<keyword id="KW-0464">Manganese</keyword>
<keyword id="KW-0479">Metal-binding</keyword>
<keyword id="KW-0540">Nuclease</keyword>
<gene>
    <name evidence="1" type="primary">rnhB</name>
    <name type="ordered locus">BSUIS_A0414</name>
</gene>
<comment type="function">
    <text evidence="1">Endonuclease that specifically degrades the RNA of RNA-DNA hybrids.</text>
</comment>
<comment type="catalytic activity">
    <reaction evidence="1">
        <text>Endonucleolytic cleavage to 5'-phosphomonoester.</text>
        <dbReference type="EC" id="3.1.26.4"/>
    </reaction>
</comment>
<comment type="cofactor">
    <cofactor evidence="1">
        <name>Mn(2+)</name>
        <dbReference type="ChEBI" id="CHEBI:29035"/>
    </cofactor>
    <cofactor evidence="1">
        <name>Mg(2+)</name>
        <dbReference type="ChEBI" id="CHEBI:18420"/>
    </cofactor>
    <text evidence="1">Manganese or magnesium. Binds 1 divalent metal ion per monomer in the absence of substrate. May bind a second metal ion after substrate binding.</text>
</comment>
<comment type="subcellular location">
    <subcellularLocation>
        <location evidence="1">Cytoplasm</location>
    </subcellularLocation>
</comment>
<comment type="similarity">
    <text evidence="1">Belongs to the RNase HII family.</text>
</comment>
<reference key="1">
    <citation type="submission" date="2007-12" db="EMBL/GenBank/DDBJ databases">
        <title>Brucella suis ATCC 23445 whole genome shotgun sequencing project.</title>
        <authorList>
            <person name="Setubal J.C."/>
            <person name="Bowns C."/>
            <person name="Boyle S."/>
            <person name="Crasta O.R."/>
            <person name="Czar M.J."/>
            <person name="Dharmanolla C."/>
            <person name="Gillespie J.J."/>
            <person name="Kenyon R.W."/>
            <person name="Lu J."/>
            <person name="Mane S."/>
            <person name="Mohapatra S."/>
            <person name="Nagrani S."/>
            <person name="Purkayastha A."/>
            <person name="Rajasimha H.K."/>
            <person name="Shallom J.M."/>
            <person name="Shallom S."/>
            <person name="Shukla M."/>
            <person name="Snyder E.E."/>
            <person name="Sobral B.W."/>
            <person name="Wattam A.R."/>
            <person name="Will R."/>
            <person name="Williams K."/>
            <person name="Yoo H."/>
            <person name="Bruce D."/>
            <person name="Detter C."/>
            <person name="Munk C."/>
            <person name="Brettin T.S."/>
        </authorList>
    </citation>
    <scope>NUCLEOTIDE SEQUENCE [LARGE SCALE GENOMIC DNA]</scope>
    <source>
        <strain>ATCC 23445 / NCTC 10510</strain>
    </source>
</reference>
<evidence type="ECO:0000255" key="1">
    <source>
        <dbReference type="HAMAP-Rule" id="MF_00052"/>
    </source>
</evidence>
<evidence type="ECO:0000255" key="2">
    <source>
        <dbReference type="PROSITE-ProRule" id="PRU01319"/>
    </source>
</evidence>
<sequence length="220" mass="23366">MKRSASDSPLLFDLPLAPDFSQEQQLMKRGLKHIAGIDEAGRGPLAGPVVAAAVVLDQNDLPEGLDDSKRLTAARREALYEIILTKAITVSVASLSARSIDASDIHKAALEAMRRAVIGLTLKPCHALVDGRDVPPGLPCPGSALVKGDQRSVSIAAASIVAKVTRDRMMIRAGAAHPPYGLEIHAGYATQKHRAAIESEGPVPGLHRYTFAPIKGRFDC</sequence>